<evidence type="ECO:0000250" key="1">
    <source>
        <dbReference type="UniProtKB" id="P23527"/>
    </source>
</evidence>
<evidence type="ECO:0000250" key="2">
    <source>
        <dbReference type="UniProtKB" id="P33778"/>
    </source>
</evidence>
<evidence type="ECO:0000250" key="3">
    <source>
        <dbReference type="UniProtKB" id="P58876"/>
    </source>
</evidence>
<evidence type="ECO:0000250" key="4">
    <source>
        <dbReference type="UniProtKB" id="P62807"/>
    </source>
</evidence>
<evidence type="ECO:0000250" key="5">
    <source>
        <dbReference type="UniProtKB" id="Q00729"/>
    </source>
</evidence>
<evidence type="ECO:0000250" key="6">
    <source>
        <dbReference type="UniProtKB" id="Q64475"/>
    </source>
</evidence>
<evidence type="ECO:0000250" key="7">
    <source>
        <dbReference type="UniProtKB" id="Q6ZWY9"/>
    </source>
</evidence>
<evidence type="ECO:0000250" key="8">
    <source>
        <dbReference type="UniProtKB" id="Q96A08"/>
    </source>
</evidence>
<evidence type="ECO:0000256" key="9">
    <source>
        <dbReference type="SAM" id="MobiDB-lite"/>
    </source>
</evidence>
<evidence type="ECO:0000269" key="10">
    <source>
    </source>
</evidence>
<evidence type="ECO:0000269" key="11">
    <source>
    </source>
</evidence>
<evidence type="ECO:0000269" key="12">
    <source>
    </source>
</evidence>
<evidence type="ECO:0000269" key="13">
    <source>
    </source>
</evidence>
<evidence type="ECO:0000269" key="14">
    <source>
    </source>
</evidence>
<evidence type="ECO:0000269" key="15">
    <source>
    </source>
</evidence>
<evidence type="ECO:0000269" key="16">
    <source>
    </source>
</evidence>
<evidence type="ECO:0000269" key="17">
    <source>
    </source>
</evidence>
<evidence type="ECO:0000269" key="18">
    <source>
    </source>
</evidence>
<evidence type="ECO:0000269" key="19">
    <source>
    </source>
</evidence>
<evidence type="ECO:0000269" key="20">
    <source>
    </source>
</evidence>
<evidence type="ECO:0000269" key="21">
    <source>
    </source>
</evidence>
<evidence type="ECO:0000269" key="22">
    <source>
    </source>
</evidence>
<evidence type="ECO:0000303" key="23">
    <source>
    </source>
</evidence>
<evidence type="ECO:0000305" key="24"/>
<evidence type="ECO:0000312" key="25">
    <source>
        <dbReference type="HGNC" id="HGNC:24700"/>
    </source>
</evidence>
<evidence type="ECO:0007744" key="26">
    <source>
    </source>
</evidence>
<evidence type="ECO:0007744" key="27">
    <source>
    </source>
</evidence>
<evidence type="ECO:0007829" key="28">
    <source>
        <dbReference type="PDB" id="6MUP"/>
    </source>
</evidence>
<gene>
    <name evidence="25" type="primary">H2BC18</name>
    <name evidence="25" type="synonym">HIST2H2BF</name>
</gene>
<proteinExistence type="evidence at protein level"/>
<name>H2B2F_HUMAN</name>
<feature type="initiator methionine" description="Removed" evidence="1">
    <location>
        <position position="1"/>
    </location>
</feature>
<feature type="chain" id="PRO_0000244826" description="Histone H2B type 2-F">
    <location>
        <begin position="2"/>
        <end position="126"/>
    </location>
</feature>
<feature type="region of interest" description="Disordered" evidence="9">
    <location>
        <begin position="1"/>
        <end position="36"/>
    </location>
</feature>
<feature type="compositionally biased region" description="Low complexity" evidence="9">
    <location>
        <begin position="1"/>
        <end position="12"/>
    </location>
</feature>
<feature type="modified residue" description="N-acetylproline" evidence="1">
    <location>
        <position position="2"/>
    </location>
</feature>
<feature type="modified residue" description="N6-(2-hydroxyisobutyryl)lysine; alternate" evidence="17">
    <location>
        <position position="6"/>
    </location>
</feature>
<feature type="modified residue" description="N6-(beta-hydroxybutyryl)lysine; alternate" evidence="19">
    <location>
        <position position="6"/>
    </location>
</feature>
<feature type="modified residue" description="N6-acetyllysine; alternate" evidence="11">
    <location>
        <position position="6"/>
    </location>
</feature>
<feature type="modified residue" description="N6-butyryllysine; alternate" evidence="18">
    <location>
        <position position="6"/>
    </location>
</feature>
<feature type="modified residue" description="N6-crotonyllysine; alternate" evidence="15">
    <location>
        <position position="6"/>
    </location>
</feature>
<feature type="modified residue" description="N6-lactoyllysine; alternate" evidence="21">
    <location>
        <position position="6"/>
    </location>
</feature>
<feature type="modified residue" description="ADP-ribosylserine" evidence="22">
    <location>
        <position position="7"/>
    </location>
</feature>
<feature type="modified residue" description="N6-(beta-hydroxybutyryl)lysine; alternate" evidence="19">
    <location>
        <position position="12"/>
    </location>
</feature>
<feature type="modified residue" description="N6-acetyllysine; alternate" evidence="4">
    <location>
        <position position="12"/>
    </location>
</feature>
<feature type="modified residue" description="N6-crotonyllysine; alternate" evidence="15">
    <location>
        <position position="12"/>
    </location>
</feature>
<feature type="modified residue" description="N6-lactoyllysine; alternate" evidence="21">
    <location>
        <position position="12"/>
    </location>
</feature>
<feature type="modified residue" description="N6-(2-hydroxyisobutyryl)lysine; alternate" evidence="17">
    <location>
        <position position="13"/>
    </location>
</feature>
<feature type="modified residue" description="N6-acetyllysine; alternate" evidence="11">
    <location>
        <position position="13"/>
    </location>
</feature>
<feature type="modified residue" description="N6-crotonyllysine; alternate" evidence="15">
    <location>
        <position position="13"/>
    </location>
</feature>
<feature type="modified residue" description="Phosphoserine; by STK4/MST1" evidence="10">
    <location>
        <position position="15"/>
    </location>
</feature>
<feature type="modified residue" description="N6-acetyllysine; alternate" evidence="11 26">
    <location>
        <position position="16"/>
    </location>
</feature>
<feature type="modified residue" description="N6-crotonyllysine; alternate" evidence="15">
    <location>
        <position position="16"/>
    </location>
</feature>
<feature type="modified residue" description="N6-lactoyllysine; alternate" evidence="21">
    <location>
        <position position="16"/>
    </location>
</feature>
<feature type="modified residue" description="N6-(beta-hydroxybutyryl)lysine; alternate" evidence="19">
    <location>
        <position position="17"/>
    </location>
</feature>
<feature type="modified residue" description="N6-acetyllysine; alternate" evidence="26">
    <location>
        <position position="17"/>
    </location>
</feature>
<feature type="modified residue" description="N6-crotonyllysine; alternate" evidence="15">
    <location>
        <position position="17"/>
    </location>
</feature>
<feature type="modified residue" description="N6-glutaryllysine; alternate" evidence="20">
    <location>
        <position position="17"/>
    </location>
</feature>
<feature type="modified residue" description="N6-lactoyllysine; alternate" evidence="21">
    <location>
        <position position="17"/>
    </location>
</feature>
<feature type="modified residue" description="N6-(2-hydroxyisobutyryl)lysine; alternate" evidence="17">
    <location>
        <position position="21"/>
    </location>
</feature>
<feature type="modified residue" description="N6-(beta-hydroxybutyryl)lysine; alternate" evidence="19">
    <location>
        <position position="21"/>
    </location>
</feature>
<feature type="modified residue" description="N6-acetyllysine; alternate" evidence="11 26">
    <location>
        <position position="21"/>
    </location>
</feature>
<feature type="modified residue" description="N6-butyryllysine; alternate" evidence="18">
    <location>
        <position position="21"/>
    </location>
</feature>
<feature type="modified residue" description="N6-crotonyllysine; alternate" evidence="15">
    <location>
        <position position="21"/>
    </location>
</feature>
<feature type="modified residue" description="N6-lactoyllysine; alternate" evidence="21">
    <location>
        <position position="21"/>
    </location>
</feature>
<feature type="modified residue" description="N6-(2-hydroxyisobutyryl)lysine; alternate" evidence="17">
    <location>
        <position position="24"/>
    </location>
</feature>
<feature type="modified residue" description="N6-acetyllysine; alternate" evidence="2">
    <location>
        <position position="24"/>
    </location>
</feature>
<feature type="modified residue" description="N6-crotonyllysine; alternate" evidence="15">
    <location>
        <position position="24"/>
    </location>
</feature>
<feature type="modified residue" description="N6-lactoyllysine; alternate" evidence="21">
    <location>
        <position position="24"/>
    </location>
</feature>
<feature type="modified residue" description="N6-(2-hydroxyisobutyryl)lysine" evidence="17">
    <location>
        <position position="25"/>
    </location>
</feature>
<feature type="modified residue" description="N6-(2-hydroxyisobutyryl)lysine; alternate" evidence="17">
    <location>
        <position position="35"/>
    </location>
</feature>
<feature type="modified residue" description="N6-(beta-hydroxybutyryl)lysine; alternate" evidence="19">
    <location>
        <position position="35"/>
    </location>
</feature>
<feature type="modified residue" description="N6-crotonyllysine; alternate" evidence="15">
    <location>
        <position position="35"/>
    </location>
</feature>
<feature type="modified residue" description="N6-glutaryllysine; alternate" evidence="20">
    <location>
        <position position="35"/>
    </location>
</feature>
<feature type="modified residue" description="N6-succinyllysine; alternate" evidence="16">
    <location>
        <position position="35"/>
    </location>
</feature>
<feature type="modified residue" description="PolyADP-ribosyl glutamic acid" evidence="6">
    <location>
        <position position="36"/>
    </location>
</feature>
<feature type="modified residue" description="Phosphoserine; by AMPK" evidence="6">
    <location>
        <position position="37"/>
    </location>
</feature>
<feature type="modified residue" description="N6-(2-hydroxyisobutyryl)lysine; alternate" evidence="17">
    <location>
        <position position="44"/>
    </location>
</feature>
<feature type="modified residue" description="N6-glutaryllysine; alternate" evidence="20">
    <location>
        <position position="44"/>
    </location>
</feature>
<feature type="modified residue" description="N6-lactoyllysine; alternate" evidence="21">
    <location>
        <position position="44"/>
    </location>
</feature>
<feature type="modified residue" description="N6-(2-hydroxyisobutyryl)lysine; alternate" evidence="17">
    <location>
        <position position="47"/>
    </location>
</feature>
<feature type="modified residue" description="N6-glutaryllysine; alternate" evidence="20">
    <location>
        <position position="47"/>
    </location>
</feature>
<feature type="modified residue" description="N6-methyllysine; alternate" evidence="4">
    <location>
        <position position="47"/>
    </location>
</feature>
<feature type="modified residue" description="N6,N6-dimethyllysine; alternate" evidence="4">
    <location>
        <position position="58"/>
    </location>
</feature>
<feature type="modified residue" description="N6-(2-hydroxyisobutyryl)lysine; alternate" evidence="17">
    <location>
        <position position="58"/>
    </location>
</feature>
<feature type="modified residue" description="Dimethylated arginine" evidence="8">
    <location>
        <position position="80"/>
    </location>
</feature>
<feature type="modified residue" description="N6,N6,N6-trimethyllysine; alternate" evidence="8">
    <location>
        <position position="86"/>
    </location>
</feature>
<feature type="modified residue" description="N6-(2-hydroxyisobutyryl)lysine; alternate" evidence="17">
    <location>
        <position position="86"/>
    </location>
</feature>
<feature type="modified residue" description="N6-(beta-hydroxybutyryl)lysine; alternate" evidence="19">
    <location>
        <position position="86"/>
    </location>
</feature>
<feature type="modified residue" description="N6-acetyllysine; alternate" evidence="8">
    <location>
        <position position="86"/>
    </location>
</feature>
<feature type="modified residue" description="N6-lactoyllysine; alternate" evidence="21">
    <location>
        <position position="86"/>
    </location>
</feature>
<feature type="modified residue" description="Omega-N-methylarginine" evidence="8">
    <location>
        <position position="87"/>
    </location>
</feature>
<feature type="modified residue" description="Omega-N-methylarginine" evidence="8">
    <location>
        <position position="93"/>
    </location>
</feature>
<feature type="modified residue" description="N6-(2-hydroxyisobutyryl)lysine; alternate" evidence="17">
    <location>
        <position position="109"/>
    </location>
</feature>
<feature type="modified residue" description="N6-glutaryllysine; alternate" evidence="20">
    <location>
        <position position="109"/>
    </location>
</feature>
<feature type="modified residue" description="N6-lactoyllysine; alternate" evidence="21">
    <location>
        <position position="109"/>
    </location>
</feature>
<feature type="modified residue" description="N6-methyllysine; alternate" evidence="4">
    <location>
        <position position="109"/>
    </location>
</feature>
<feature type="modified residue" description="Phosphothreonine" evidence="5">
    <location>
        <position position="116"/>
    </location>
</feature>
<feature type="modified residue" description="N6-(2-hydroxyisobutyryl)lysine; alternate" evidence="17">
    <location>
        <position position="117"/>
    </location>
</feature>
<feature type="modified residue" description="N6-(beta-hydroxybutyryl)lysine; alternate" evidence="19">
    <location>
        <position position="117"/>
    </location>
</feature>
<feature type="modified residue" description="N6-glutaryllysine; alternate" evidence="20">
    <location>
        <position position="117"/>
    </location>
</feature>
<feature type="modified residue" description="N6-lactoyllysine; alternate" evidence="21">
    <location>
        <position position="117"/>
    </location>
</feature>
<feature type="modified residue" description="N6-malonyllysine; alternate" evidence="16">
    <location>
        <position position="117"/>
    </location>
</feature>
<feature type="modified residue" description="N6-methylated lysine; alternate" evidence="5">
    <location>
        <position position="117"/>
    </location>
</feature>
<feature type="modified residue" description="N6-succinyllysine; alternate" evidence="16">
    <location>
        <position position="117"/>
    </location>
</feature>
<feature type="modified residue" description="N6-(2-hydroxyisobutyryl)lysine; alternate" evidence="17">
    <location>
        <position position="121"/>
    </location>
</feature>
<feature type="modified residue" description="N6-(beta-hydroxybutyryl)lysine; alternate" evidence="19">
    <location>
        <position position="121"/>
    </location>
</feature>
<feature type="modified residue" description="N6-glutaryllysine; alternate" evidence="20">
    <location>
        <position position="121"/>
    </location>
</feature>
<feature type="modified residue" description="N6-lactoyllysine; alternate" evidence="21">
    <location>
        <position position="121"/>
    </location>
</feature>
<feature type="modified residue" description="N6-succinyllysine; alternate" evidence="16">
    <location>
        <position position="121"/>
    </location>
</feature>
<feature type="glycosylation site" description="O-linked (GlcNAc) serine" evidence="4">
    <location>
        <position position="113"/>
    </location>
</feature>
<feature type="cross-link" description="Glycyl lysine isopeptide (Lys-Gly) (interchain with G-Cter in SUMO2); alternate" evidence="3">
    <location>
        <position position="6"/>
    </location>
</feature>
<feature type="cross-link" description="Glycyl lysine isopeptide (Lys-Gly) (interchain with G-Cter in SUMO2); alternate" evidence="27">
    <location>
        <position position="21"/>
    </location>
</feature>
<feature type="cross-link" description="Glycyl lysine isopeptide (Lys-Gly) (interchain with G-Cter in ubiquitin); alternate" evidence="14">
    <location>
        <position position="35"/>
    </location>
</feature>
<feature type="cross-link" description="Glycyl lysine isopeptide (Lys-Gly) (interchain with G-Cter in ubiquitin); alternate" evidence="12 13">
    <location>
        <position position="121"/>
    </location>
</feature>
<feature type="splice variant" id="VSP_043431" description="In isoform 2." evidence="23">
    <original>K</original>
    <variation>KLIGPILWK</variation>
    <location>
        <position position="126"/>
    </location>
</feature>
<feature type="helix" evidence="28">
    <location>
        <begin position="39"/>
        <end position="49"/>
    </location>
</feature>
<feature type="turn" evidence="28">
    <location>
        <begin position="57"/>
        <end position="59"/>
    </location>
</feature>
<feature type="helix" evidence="28">
    <location>
        <begin position="60"/>
        <end position="67"/>
    </location>
</feature>
<feature type="helix" evidence="28">
    <location>
        <begin position="70"/>
        <end position="75"/>
    </location>
</feature>
<feature type="helix" evidence="28">
    <location>
        <begin position="78"/>
        <end position="84"/>
    </location>
</feature>
<feature type="helix" evidence="28">
    <location>
        <begin position="93"/>
        <end position="102"/>
    </location>
</feature>
<feature type="helix" evidence="28">
    <location>
        <begin position="107"/>
        <end position="116"/>
    </location>
</feature>
<feature type="turn" evidence="28">
    <location>
        <begin position="117"/>
        <end position="122"/>
    </location>
</feature>
<protein>
    <recommendedName>
        <fullName>Histone H2B type 2-F</fullName>
    </recommendedName>
    <alternativeName>
        <fullName evidence="25">H2B-clustered histone 18</fullName>
    </alternativeName>
</protein>
<accession>Q5QNW6</accession>
<accession>A8K0U9</accession>
<accession>B4DLA9</accession>
<organism>
    <name type="scientific">Homo sapiens</name>
    <name type="common">Human</name>
    <dbReference type="NCBI Taxonomy" id="9606"/>
    <lineage>
        <taxon>Eukaryota</taxon>
        <taxon>Metazoa</taxon>
        <taxon>Chordata</taxon>
        <taxon>Craniata</taxon>
        <taxon>Vertebrata</taxon>
        <taxon>Euteleostomi</taxon>
        <taxon>Mammalia</taxon>
        <taxon>Eutheria</taxon>
        <taxon>Euarchontoglires</taxon>
        <taxon>Primates</taxon>
        <taxon>Haplorrhini</taxon>
        <taxon>Catarrhini</taxon>
        <taxon>Hominidae</taxon>
        <taxon>Homo</taxon>
    </lineage>
</organism>
<reference key="1">
    <citation type="journal article" date="2004" name="Nat. Genet.">
        <title>Complete sequencing and characterization of 21,243 full-length human cDNAs.</title>
        <authorList>
            <person name="Ota T."/>
            <person name="Suzuki Y."/>
            <person name="Nishikawa T."/>
            <person name="Otsuki T."/>
            <person name="Sugiyama T."/>
            <person name="Irie R."/>
            <person name="Wakamatsu A."/>
            <person name="Hayashi K."/>
            <person name="Sato H."/>
            <person name="Nagai K."/>
            <person name="Kimura K."/>
            <person name="Makita H."/>
            <person name="Sekine M."/>
            <person name="Obayashi M."/>
            <person name="Nishi T."/>
            <person name="Shibahara T."/>
            <person name="Tanaka T."/>
            <person name="Ishii S."/>
            <person name="Yamamoto J."/>
            <person name="Saito K."/>
            <person name="Kawai Y."/>
            <person name="Isono Y."/>
            <person name="Nakamura Y."/>
            <person name="Nagahari K."/>
            <person name="Murakami K."/>
            <person name="Yasuda T."/>
            <person name="Iwayanagi T."/>
            <person name="Wagatsuma M."/>
            <person name="Shiratori A."/>
            <person name="Sudo H."/>
            <person name="Hosoiri T."/>
            <person name="Kaku Y."/>
            <person name="Kodaira H."/>
            <person name="Kondo H."/>
            <person name="Sugawara M."/>
            <person name="Takahashi M."/>
            <person name="Kanda K."/>
            <person name="Yokoi T."/>
            <person name="Furuya T."/>
            <person name="Kikkawa E."/>
            <person name="Omura Y."/>
            <person name="Abe K."/>
            <person name="Kamihara K."/>
            <person name="Katsuta N."/>
            <person name="Sato K."/>
            <person name="Tanikawa M."/>
            <person name="Yamazaki M."/>
            <person name="Ninomiya K."/>
            <person name="Ishibashi T."/>
            <person name="Yamashita H."/>
            <person name="Murakawa K."/>
            <person name="Fujimori K."/>
            <person name="Tanai H."/>
            <person name="Kimata M."/>
            <person name="Watanabe M."/>
            <person name="Hiraoka S."/>
            <person name="Chiba Y."/>
            <person name="Ishida S."/>
            <person name="Ono Y."/>
            <person name="Takiguchi S."/>
            <person name="Watanabe S."/>
            <person name="Yosida M."/>
            <person name="Hotuta T."/>
            <person name="Kusano J."/>
            <person name="Kanehori K."/>
            <person name="Takahashi-Fujii A."/>
            <person name="Hara H."/>
            <person name="Tanase T.-O."/>
            <person name="Nomura Y."/>
            <person name="Togiya S."/>
            <person name="Komai F."/>
            <person name="Hara R."/>
            <person name="Takeuchi K."/>
            <person name="Arita M."/>
            <person name="Imose N."/>
            <person name="Musashino K."/>
            <person name="Yuuki H."/>
            <person name="Oshima A."/>
            <person name="Sasaki N."/>
            <person name="Aotsuka S."/>
            <person name="Yoshikawa Y."/>
            <person name="Matsunawa H."/>
            <person name="Ichihara T."/>
            <person name="Shiohata N."/>
            <person name="Sano S."/>
            <person name="Moriya S."/>
            <person name="Momiyama H."/>
            <person name="Satoh N."/>
            <person name="Takami S."/>
            <person name="Terashima Y."/>
            <person name="Suzuki O."/>
            <person name="Nakagawa S."/>
            <person name="Senoh A."/>
            <person name="Mizoguchi H."/>
            <person name="Goto Y."/>
            <person name="Shimizu F."/>
            <person name="Wakebe H."/>
            <person name="Hishigaki H."/>
            <person name="Watanabe T."/>
            <person name="Sugiyama A."/>
            <person name="Takemoto M."/>
            <person name="Kawakami B."/>
            <person name="Yamazaki M."/>
            <person name="Watanabe K."/>
            <person name="Kumagai A."/>
            <person name="Itakura S."/>
            <person name="Fukuzumi Y."/>
            <person name="Fujimori Y."/>
            <person name="Komiyama M."/>
            <person name="Tashiro H."/>
            <person name="Tanigami A."/>
            <person name="Fujiwara T."/>
            <person name="Ono T."/>
            <person name="Yamada K."/>
            <person name="Fujii Y."/>
            <person name="Ozaki K."/>
            <person name="Hirao M."/>
            <person name="Ohmori Y."/>
            <person name="Kawabata A."/>
            <person name="Hikiji T."/>
            <person name="Kobatake N."/>
            <person name="Inagaki H."/>
            <person name="Ikema Y."/>
            <person name="Okamoto S."/>
            <person name="Okitani R."/>
            <person name="Kawakami T."/>
            <person name="Noguchi S."/>
            <person name="Itoh T."/>
            <person name="Shigeta K."/>
            <person name="Senba T."/>
            <person name="Matsumura K."/>
            <person name="Nakajima Y."/>
            <person name="Mizuno T."/>
            <person name="Morinaga M."/>
            <person name="Sasaki M."/>
            <person name="Togashi T."/>
            <person name="Oyama M."/>
            <person name="Hata H."/>
            <person name="Watanabe M."/>
            <person name="Komatsu T."/>
            <person name="Mizushima-Sugano J."/>
            <person name="Satoh T."/>
            <person name="Shirai Y."/>
            <person name="Takahashi Y."/>
            <person name="Nakagawa K."/>
            <person name="Okumura K."/>
            <person name="Nagase T."/>
            <person name="Nomura N."/>
            <person name="Kikuchi H."/>
            <person name="Masuho Y."/>
            <person name="Yamashita R."/>
            <person name="Nakai K."/>
            <person name="Yada T."/>
            <person name="Nakamura Y."/>
            <person name="Ohara O."/>
            <person name="Isogai T."/>
            <person name="Sugano S."/>
        </authorList>
    </citation>
    <scope>NUCLEOTIDE SEQUENCE [LARGE SCALE MRNA] (ISOFORMS 1 AND 2)</scope>
    <source>
        <tissue>Amygdala</tissue>
        <tissue>Tongue</tissue>
    </source>
</reference>
<reference key="2">
    <citation type="journal article" date="2006" name="Nature">
        <title>The DNA sequence and biological annotation of human chromosome 1.</title>
        <authorList>
            <person name="Gregory S.G."/>
            <person name="Barlow K.F."/>
            <person name="McLay K.E."/>
            <person name="Kaul R."/>
            <person name="Swarbreck D."/>
            <person name="Dunham A."/>
            <person name="Scott C.E."/>
            <person name="Howe K.L."/>
            <person name="Woodfine K."/>
            <person name="Spencer C.C.A."/>
            <person name="Jones M.C."/>
            <person name="Gillson C."/>
            <person name="Searle S."/>
            <person name="Zhou Y."/>
            <person name="Kokocinski F."/>
            <person name="McDonald L."/>
            <person name="Evans R."/>
            <person name="Phillips K."/>
            <person name="Atkinson A."/>
            <person name="Cooper R."/>
            <person name="Jones C."/>
            <person name="Hall R.E."/>
            <person name="Andrews T.D."/>
            <person name="Lloyd C."/>
            <person name="Ainscough R."/>
            <person name="Almeida J.P."/>
            <person name="Ambrose K.D."/>
            <person name="Anderson F."/>
            <person name="Andrew R.W."/>
            <person name="Ashwell R.I.S."/>
            <person name="Aubin K."/>
            <person name="Babbage A.K."/>
            <person name="Bagguley C.L."/>
            <person name="Bailey J."/>
            <person name="Beasley H."/>
            <person name="Bethel G."/>
            <person name="Bird C.P."/>
            <person name="Bray-Allen S."/>
            <person name="Brown J.Y."/>
            <person name="Brown A.J."/>
            <person name="Buckley D."/>
            <person name="Burton J."/>
            <person name="Bye J."/>
            <person name="Carder C."/>
            <person name="Chapman J.C."/>
            <person name="Clark S.Y."/>
            <person name="Clarke G."/>
            <person name="Clee C."/>
            <person name="Cobley V."/>
            <person name="Collier R.E."/>
            <person name="Corby N."/>
            <person name="Coville G.J."/>
            <person name="Davies J."/>
            <person name="Deadman R."/>
            <person name="Dunn M."/>
            <person name="Earthrowl M."/>
            <person name="Ellington A.G."/>
            <person name="Errington H."/>
            <person name="Frankish A."/>
            <person name="Frankland J."/>
            <person name="French L."/>
            <person name="Garner P."/>
            <person name="Garnett J."/>
            <person name="Gay L."/>
            <person name="Ghori M.R.J."/>
            <person name="Gibson R."/>
            <person name="Gilby L.M."/>
            <person name="Gillett W."/>
            <person name="Glithero R.J."/>
            <person name="Grafham D.V."/>
            <person name="Griffiths C."/>
            <person name="Griffiths-Jones S."/>
            <person name="Grocock R."/>
            <person name="Hammond S."/>
            <person name="Harrison E.S.I."/>
            <person name="Hart E."/>
            <person name="Haugen E."/>
            <person name="Heath P.D."/>
            <person name="Holmes S."/>
            <person name="Holt K."/>
            <person name="Howden P.J."/>
            <person name="Hunt A.R."/>
            <person name="Hunt S.E."/>
            <person name="Hunter G."/>
            <person name="Isherwood J."/>
            <person name="James R."/>
            <person name="Johnson C."/>
            <person name="Johnson D."/>
            <person name="Joy A."/>
            <person name="Kay M."/>
            <person name="Kershaw J.K."/>
            <person name="Kibukawa M."/>
            <person name="Kimberley A.M."/>
            <person name="King A."/>
            <person name="Knights A.J."/>
            <person name="Lad H."/>
            <person name="Laird G."/>
            <person name="Lawlor S."/>
            <person name="Leongamornlert D.A."/>
            <person name="Lloyd D.M."/>
            <person name="Loveland J."/>
            <person name="Lovell J."/>
            <person name="Lush M.J."/>
            <person name="Lyne R."/>
            <person name="Martin S."/>
            <person name="Mashreghi-Mohammadi M."/>
            <person name="Matthews L."/>
            <person name="Matthews N.S.W."/>
            <person name="McLaren S."/>
            <person name="Milne S."/>
            <person name="Mistry S."/>
            <person name="Moore M.J.F."/>
            <person name="Nickerson T."/>
            <person name="O'Dell C.N."/>
            <person name="Oliver K."/>
            <person name="Palmeiri A."/>
            <person name="Palmer S.A."/>
            <person name="Parker A."/>
            <person name="Patel D."/>
            <person name="Pearce A.V."/>
            <person name="Peck A.I."/>
            <person name="Pelan S."/>
            <person name="Phelps K."/>
            <person name="Phillimore B.J."/>
            <person name="Plumb R."/>
            <person name="Rajan J."/>
            <person name="Raymond C."/>
            <person name="Rouse G."/>
            <person name="Saenphimmachak C."/>
            <person name="Sehra H.K."/>
            <person name="Sheridan E."/>
            <person name="Shownkeen R."/>
            <person name="Sims S."/>
            <person name="Skuce C.D."/>
            <person name="Smith M."/>
            <person name="Steward C."/>
            <person name="Subramanian S."/>
            <person name="Sycamore N."/>
            <person name="Tracey A."/>
            <person name="Tromans A."/>
            <person name="Van Helmond Z."/>
            <person name="Wall M."/>
            <person name="Wallis J.M."/>
            <person name="White S."/>
            <person name="Whitehead S.L."/>
            <person name="Wilkinson J.E."/>
            <person name="Willey D.L."/>
            <person name="Williams H."/>
            <person name="Wilming L."/>
            <person name="Wray P.W."/>
            <person name="Wu Z."/>
            <person name="Coulson A."/>
            <person name="Vaudin M."/>
            <person name="Sulston J.E."/>
            <person name="Durbin R.M."/>
            <person name="Hubbard T."/>
            <person name="Wooster R."/>
            <person name="Dunham I."/>
            <person name="Carter N.P."/>
            <person name="McVean G."/>
            <person name="Ross M.T."/>
            <person name="Harrow J."/>
            <person name="Olson M.V."/>
            <person name="Beck S."/>
            <person name="Rogers J."/>
            <person name="Bentley D.R."/>
        </authorList>
    </citation>
    <scope>NUCLEOTIDE SEQUENCE [LARGE SCALE GENOMIC DNA]</scope>
</reference>
<reference key="3">
    <citation type="journal article" date="2004" name="Genome Res.">
        <title>The status, quality, and expansion of the NIH full-length cDNA project: the Mammalian Gene Collection (MGC).</title>
        <authorList>
            <consortium name="The MGC Project Team"/>
        </authorList>
    </citation>
    <scope>NUCLEOTIDE SEQUENCE [LARGE SCALE MRNA] (ISOFORM 1)</scope>
    <source>
        <tissue>Pancreas</tissue>
    </source>
</reference>
<reference key="4">
    <citation type="journal article" date="2003" name="Cell">
        <title>Apoptotic phosphorylation of histone H2B is mediated by mammalian sterile twenty kinase.</title>
        <authorList>
            <person name="Cheung W.L."/>
            <person name="Ajiro K."/>
            <person name="Samejima K."/>
            <person name="Kloc M."/>
            <person name="Cheung P."/>
            <person name="Mizzen C.A."/>
            <person name="Beeser A."/>
            <person name="Etkin L.D."/>
            <person name="Chernoff J."/>
            <person name="Earnshaw W.C."/>
            <person name="Allis C.D."/>
        </authorList>
    </citation>
    <scope>PHOSPHORYLATION AT SER-15</scope>
</reference>
<reference key="5">
    <citation type="journal article" date="2005" name="Mol. Cell">
        <title>Monoubiquitination of human histone H2B: the factors involved and their roles in HOX gene regulation.</title>
        <authorList>
            <person name="Zhu B."/>
            <person name="Zheng Y."/>
            <person name="Pham A.-D."/>
            <person name="Mandal S.S."/>
            <person name="Erdjument-Bromage H."/>
            <person name="Tempst P."/>
            <person name="Reinberg D."/>
        </authorList>
    </citation>
    <scope>UBIQUITINATION AT LYS-121</scope>
</reference>
<reference key="6">
    <citation type="journal article" date="2005" name="Mol. Cell. Biochem.">
        <title>Inhibition of core histones acetylation by carcinogenic nickel(II).</title>
        <authorList>
            <person name="Golebiowski F."/>
            <person name="Kasprzak K.S."/>
        </authorList>
    </citation>
    <scope>ACETYLATION AT LYS-6; LYS-13; LYS-16 AND LYS-21</scope>
</reference>
<reference key="7">
    <citation type="journal article" date="2006" name="Cell">
        <title>Histone H2B monoubiquitination functions cooperatively with FACT to regulate elongation by RNA polymerase II.</title>
        <authorList>
            <person name="Pavri R."/>
            <person name="Zhu B."/>
            <person name="Li G."/>
            <person name="Trojer P."/>
            <person name="Mandal S."/>
            <person name="Shilatifard A."/>
            <person name="Reinberg D."/>
        </authorList>
    </citation>
    <scope>UBIQUITINATION AT LYS-121</scope>
</reference>
<reference key="8">
    <citation type="journal article" date="2006" name="Mol. Cell. Proteomics">
        <title>Characterization of histones H2A and H2B variants and their post-translational modifications by mass spectrometry.</title>
        <authorList>
            <person name="Bonenfant D."/>
            <person name="Coulot M."/>
            <person name="Towbin H."/>
            <person name="Schindler P."/>
            <person name="van Oostrum J."/>
        </authorList>
    </citation>
    <scope>IDENTIFICATION BY MASS SPECTROMETRY [LARGE SCALE ANALYSIS]</scope>
</reference>
<reference key="9">
    <citation type="journal article" date="2009" name="Science">
        <title>Lysine acetylation targets protein complexes and co-regulates major cellular functions.</title>
        <authorList>
            <person name="Choudhary C."/>
            <person name="Kumar C."/>
            <person name="Gnad F."/>
            <person name="Nielsen M.L."/>
            <person name="Rehman M."/>
            <person name="Walther T.C."/>
            <person name="Olsen J.V."/>
            <person name="Mann M."/>
        </authorList>
    </citation>
    <scope>ACETYLATION [LARGE SCALE ANALYSIS] AT LYS-16; LYS-17 AND LYS-21</scope>
    <scope>IDENTIFICATION BY MASS SPECTROMETRY [LARGE SCALE ANALYSIS]</scope>
</reference>
<reference key="10">
    <citation type="journal article" date="2011" name="Cell">
        <title>Identification of 67 histone marks and histone lysine crotonylation as a new type of histone modification.</title>
        <authorList>
            <person name="Tan M."/>
            <person name="Luo H."/>
            <person name="Lee S."/>
            <person name="Jin F."/>
            <person name="Yang J.S."/>
            <person name="Montellier E."/>
            <person name="Buchou T."/>
            <person name="Cheng Z."/>
            <person name="Rousseaux S."/>
            <person name="Rajagopal N."/>
            <person name="Lu Z."/>
            <person name="Ye Z."/>
            <person name="Zhu Q."/>
            <person name="Wysocka J."/>
            <person name="Ye Y."/>
            <person name="Khochbin S."/>
            <person name="Ren B."/>
            <person name="Zhao Y."/>
        </authorList>
    </citation>
    <scope>CROTONYLATION AT LYS-6; LYS-12; LYS-13; LYS-16; LYS-17; LYS-21; LYS-24 AND LYS-35</scope>
</reference>
<reference key="11">
    <citation type="journal article" date="2011" name="Mol. Cell">
        <title>The RING finger protein MSL2 in the MOF complex is an E3 ubiquitin ligase for H2B K34 and is involved in crosstalk with H3 K4 and K79 methylation.</title>
        <authorList>
            <person name="Wu L."/>
            <person name="Zee B.M."/>
            <person name="Wang Y."/>
            <person name="Garcia B.A."/>
            <person name="Dou Y."/>
        </authorList>
    </citation>
    <scope>UBIQUITINATION AT LYS-35</scope>
</reference>
<reference key="12">
    <citation type="journal article" date="2012" name="Mol. Cell. Proteomics">
        <title>Lysine succinylation and lysine malonylation in histones.</title>
        <authorList>
            <person name="Xie Z."/>
            <person name="Dai J."/>
            <person name="Dai L."/>
            <person name="Tan M."/>
            <person name="Cheng Z."/>
            <person name="Wu Y."/>
            <person name="Boeke J.D."/>
            <person name="Zhao Y."/>
        </authorList>
    </citation>
    <scope>SUCCINYLATION AT LYS-35; LYS-117 AND LYS-121</scope>
    <scope>MALONYLATION AT LYS-117</scope>
</reference>
<reference key="13">
    <citation type="journal article" date="2012" name="Proc. Natl. Acad. Sci. U.S.A.">
        <title>N-terminal acetylome analyses and functional insights of the N-terminal acetyltransferase NatB.</title>
        <authorList>
            <person name="Van Damme P."/>
            <person name="Lasa M."/>
            <person name="Polevoda B."/>
            <person name="Gazquez C."/>
            <person name="Elosegui-Artola A."/>
            <person name="Kim D.S."/>
            <person name="De Juan-Pardo E."/>
            <person name="Demeyer K."/>
            <person name="Hole K."/>
            <person name="Larrea E."/>
            <person name="Timmerman E."/>
            <person name="Prieto J."/>
            <person name="Arnesen T."/>
            <person name="Sherman F."/>
            <person name="Gevaert K."/>
            <person name="Aldabe R."/>
        </authorList>
    </citation>
    <scope>IDENTIFICATION BY MASS SPECTROMETRY [LARGE SCALE ANALYSIS]</scope>
</reference>
<reference key="14">
    <citation type="journal article" date="2013" name="Genes Dev.">
        <title>USP49 deubiquitinates histone H2B and regulates cotranscriptional pre-mRNA splicing.</title>
        <authorList>
            <person name="Zhang Z."/>
            <person name="Jones A."/>
            <person name="Joo H.Y."/>
            <person name="Zhou D."/>
            <person name="Cao Y."/>
            <person name="Chen S."/>
            <person name="Erdjument-Bromage H."/>
            <person name="Renfrow M."/>
            <person name="He H."/>
            <person name="Tempst P."/>
            <person name="Townes T.M."/>
            <person name="Giles K.E."/>
            <person name="Ma L."/>
            <person name="Wang H."/>
        </authorList>
    </citation>
    <scope>UBIQUITINATION</scope>
    <scope>DEUBIQUITINATION BY USP49</scope>
</reference>
<reference key="15">
    <citation type="journal article" date="2014" name="Nat. Chem. Biol.">
        <title>Lysine 2-hydroxyisobutyrylation is a widely distributed active histone mark.</title>
        <authorList>
            <person name="Dai L."/>
            <person name="Peng C."/>
            <person name="Montellier E."/>
            <person name="Lu Z."/>
            <person name="Chen Y."/>
            <person name="Ishii H."/>
            <person name="Debernardi A."/>
            <person name="Buchou T."/>
            <person name="Rousseaux S."/>
            <person name="Jin F."/>
            <person name="Sabari B.R."/>
            <person name="Deng Z."/>
            <person name="Allis C.D."/>
            <person name="Ren B."/>
            <person name="Khochbin S."/>
            <person name="Zhao Y."/>
        </authorList>
    </citation>
    <scope>HYDROXYBUTYRYLATION AT LYS-6; LYS-13; LYS-21; LYS-24; LYS-25; LYS-35; LYS-44; LYS-47; LYS-58; LYS-86; LYS-109; LYS-117 AND LYS-121</scope>
</reference>
<reference key="16">
    <citation type="journal article" date="2016" name="Mol. Cell">
        <title>Dynamic competing histone H4 K5K8 acetylation and butyrylation are hallmarks of highly active gene promoters.</title>
        <authorList>
            <person name="Goudarzi A."/>
            <person name="Zhang D."/>
            <person name="Huang H."/>
            <person name="Barral S."/>
            <person name="Kwon O.K."/>
            <person name="Qi S."/>
            <person name="Tang Z."/>
            <person name="Buchou T."/>
            <person name="Vitte A.L."/>
            <person name="He T."/>
            <person name="Cheng Z."/>
            <person name="Montellier E."/>
            <person name="Gaucher J."/>
            <person name="Curtet S."/>
            <person name="Debernardi A."/>
            <person name="Charbonnier G."/>
            <person name="Puthier D."/>
            <person name="Petosa C."/>
            <person name="Panne D."/>
            <person name="Rousseaux S."/>
            <person name="Roeder R.G."/>
            <person name="Zhao Y."/>
            <person name="Khochbin S."/>
        </authorList>
    </citation>
    <scope>BUTYRYLATION AT LYS-6 AND LYS-21</scope>
</reference>
<reference key="17">
    <citation type="journal article" date="2016" name="Mol. Cell">
        <title>Metabolic regulation of gene expression by histone lysine beta-hydroxybutyrylation.</title>
        <authorList>
            <person name="Xie Z."/>
            <person name="Zhang D."/>
            <person name="Chung D."/>
            <person name="Tang Z."/>
            <person name="Huang H."/>
            <person name="Dai L."/>
            <person name="Qi S."/>
            <person name="Li J."/>
            <person name="Colak G."/>
            <person name="Chen Y."/>
            <person name="Xia C."/>
            <person name="Peng C."/>
            <person name="Ruan H."/>
            <person name="Kirkey M."/>
            <person name="Wang D."/>
            <person name="Jensen L.M."/>
            <person name="Kwon O.K."/>
            <person name="Lee S."/>
            <person name="Pletcher S.D."/>
            <person name="Tan M."/>
            <person name="Lombard D.B."/>
            <person name="White K.P."/>
            <person name="Zhao H."/>
            <person name="Li J."/>
            <person name="Roeder R.G."/>
            <person name="Yang X."/>
            <person name="Zhao Y."/>
        </authorList>
    </citation>
    <scope>HYDROXYBUTYRYLATION AT LYS-6; LYS-12; LYS-17; LYS-21; LYS-35; LYS-86; LYS-117 AND LYS-121</scope>
</reference>
<reference key="18">
    <citation type="journal article" date="2017" name="Nat. Struct. Mol. Biol.">
        <title>Site-specific mapping of the human SUMO proteome reveals co-modification with phosphorylation.</title>
        <authorList>
            <person name="Hendriks I.A."/>
            <person name="Lyon D."/>
            <person name="Young C."/>
            <person name="Jensen L.J."/>
            <person name="Vertegaal A.C."/>
            <person name="Nielsen M.L."/>
        </authorList>
    </citation>
    <scope>SUMOYLATION [LARGE SCALE ANALYSIS] AT LYS-21</scope>
    <scope>IDENTIFICATION BY MASS SPECTROMETRY [LARGE SCALE ANALYSIS]</scope>
</reference>
<reference key="19">
    <citation type="journal article" date="2019" name="Mol. Cell">
        <title>Glutarylation of histone H4 lysine 91 regulates chromatin dynamics.</title>
        <authorList>
            <person name="Bao X."/>
            <person name="Liu Z."/>
            <person name="Zhang W."/>
            <person name="Gladysz K."/>
            <person name="Fung Y.M.E."/>
            <person name="Tian G."/>
            <person name="Xiong Y."/>
            <person name="Wong J.W.H."/>
            <person name="Yuen K.W.Y."/>
            <person name="Li X.D."/>
        </authorList>
    </citation>
    <scope>GLUTARYLATION AT LYS-17; LYS-35; LYS-44; LYS-47; LYS-109; LYS-117 AND LYS-121</scope>
</reference>
<reference key="20">
    <citation type="journal article" date="2019" name="Nature">
        <title>Metabolic regulation of gene expression by histone lactylation.</title>
        <authorList>
            <person name="Zhang D."/>
            <person name="Tang Z."/>
            <person name="Huang H."/>
            <person name="Zhou G."/>
            <person name="Cui C."/>
            <person name="Weng Y."/>
            <person name="Liu W."/>
            <person name="Kim S."/>
            <person name="Lee S."/>
            <person name="Perez-Neut M."/>
            <person name="Ding J."/>
            <person name="Czyz D."/>
            <person name="Hu R."/>
            <person name="Ye Z."/>
            <person name="He M."/>
            <person name="Zheng Y.G."/>
            <person name="Shuman H.A."/>
            <person name="Dai L."/>
            <person name="Ren B."/>
            <person name="Roeder R.G."/>
            <person name="Becker L."/>
            <person name="Zhao Y."/>
        </authorList>
    </citation>
    <scope>LACTYLATION AT LYS-6; LYS-12; LYS-16; LYS-17; LYS-21; LYS-24; LYS-44; LYS-86; LYS-109; LYS-117 AND LYS-121</scope>
</reference>
<reference key="21">
    <citation type="journal article" date="2021" name="Elife">
        <title>Serine ADP-ribosylation marks nucleosomes for ALC1-dependent chromatin remodeling.</title>
        <authorList>
            <person name="Mohapatra J."/>
            <person name="Tashiro K."/>
            <person name="Beckner R.L."/>
            <person name="Sierra J."/>
            <person name="Kilgore J.A."/>
            <person name="Williams N.S."/>
            <person name="Liszczak G."/>
        </authorList>
    </citation>
    <scope>ADP-RIBOSYLATION AT SER-7</scope>
</reference>
<comment type="function">
    <text>Core component of nucleosome. Nucleosomes wrap and compact DNA into chromatin, limiting DNA accessibility to the cellular machineries which require DNA as a template. Histones thereby play a central role in transcription regulation, DNA repair, DNA replication and chromosomal stability. DNA accessibility is regulated via a complex set of post-translational modifications of histones, also called histone code, and nucleosome remodeling.</text>
</comment>
<comment type="subunit">
    <text>The nucleosome is a histone octamer containing two molecules each of H2A, H2B, H3 and H4 assembled in one H3-H4 heterotetramer and two H2A-H2B heterodimers. The octamer wraps approximately 147 bp of DNA.</text>
</comment>
<comment type="subcellular location">
    <subcellularLocation>
        <location>Nucleus</location>
    </subcellularLocation>
    <subcellularLocation>
        <location>Chromosome</location>
    </subcellularLocation>
</comment>
<comment type="alternative products">
    <event type="alternative splicing"/>
    <isoform>
        <id>Q5QNW6-1</id>
        <name>1</name>
        <sequence type="displayed"/>
    </isoform>
    <isoform>
        <id>Q5QNW6-2</id>
        <name>2</name>
        <sequence type="described" ref="VSP_043431"/>
    </isoform>
</comment>
<comment type="PTM">
    <text>Monoubiquitination at Lys-35 (H2BK34Ub) by the MSL1/MSL2 dimer is required for histone H3 'Lys-4' (H3K4me) and 'Lys-79' (H3K79me) methylation and transcription activation at specific gene loci, such as HOXA9 and MEIS1 loci. Similarly, monoubiquitination at Lys-121 (H2BK120Ub) by the RNF20/40 complex gives a specific tag for epigenetic transcriptional activation and is also prerequisite for histone H3 'Lys-4' and 'Lys-79' methylation. It also functions cooperatively with the FACT dimer to stimulate elongation by RNA polymerase II. H2BK120Ub also acts as a regulator of mRNA splicing: deubiquitination by USP49 is required for efficient cotranscriptional splicing of a large set of exons.</text>
</comment>
<comment type="PTM">
    <text evidence="6 10">Phosphorylation at Ser-37 (H2BS36ph) by AMPK in response to stress promotes transcription (By similarity). Phosphorylated on Ser-15 (H2BS14ph) by STK4/MST1 during apoptosis; which facilitates apoptotic chromatin condensation (PubMed:12757711). Also phosphorylated on Ser-15 in response to DNA double strand breaks (DSBs), and in correlation with somatic hypermutation and immunoglobulin class-switch recombination.</text>
</comment>
<comment type="PTM">
    <text evidence="4">GlcNAcylation at Ser-113 promotes monoubiquitination of Lys-121. It fluctuates in response to extracellular glucose, and associates with transcribed genes (By similarity).</text>
</comment>
<comment type="PTM">
    <text evidence="7 22">ADP-ribosylated by PARP1 or PARP2 on Ser-7 (H2BS6ADPr) in response to DNA damage (PubMed:34874266). H2BS6ADPr promotes recruitment of CHD1L (PubMed:34874266). Poly ADP-ribosylation on Glu-36 (H2BE35ADPr) by PARP1 regulates adipogenesis: it inhibits phosphorylation at Ser-37 (H2BS36ph), thereby blocking expression of pro-adipogenetic genes (By similarity).</text>
</comment>
<comment type="PTM">
    <text evidence="15">Crotonylation (Kcr) is specifically present in male germ cells and marks testis-specific genes in post-meiotic cells, including X-linked genes that escape sex chromosome inactivation in haploid cells. Crotonylation marks active promoters and enhancers and confers resistance to transcriptional repressors. It is also associated with post-meiotically activated genes on autosomes.</text>
</comment>
<comment type="PTM">
    <text evidence="21">Lactylated in macrophages by EP300/P300 by using lactoyl-CoA directly derived from endogenous or exogenous lactate, leading to stimulates gene transcription.</text>
</comment>
<comment type="similarity">
    <text evidence="24">Belongs to the histone H2B family.</text>
</comment>
<sequence>MPDPAKSAPAPKKGSKKAVTKVQKKDGKKRKRSRKESYSVYVYKVLKQVHPDTGISSKAMGIMNSFVNDIFERIAGEASRLAHYNKRSTITSREIQTAVRLLLPGELAKHAVSEGTKAVTKYTSSK</sequence>
<dbReference type="EMBL" id="AK289664">
    <property type="protein sequence ID" value="BAF82353.1"/>
    <property type="molecule type" value="mRNA"/>
</dbReference>
<dbReference type="EMBL" id="AK296916">
    <property type="protein sequence ID" value="BAG59471.1"/>
    <property type="molecule type" value="mRNA"/>
</dbReference>
<dbReference type="EMBL" id="AL591493">
    <property type="protein sequence ID" value="CAI12558.1"/>
    <property type="molecule type" value="Genomic_DNA"/>
</dbReference>
<dbReference type="EMBL" id="BC110793">
    <property type="protein sequence ID" value="AAI10794.1"/>
    <property type="molecule type" value="mRNA"/>
</dbReference>
<dbReference type="CCDS" id="CCDS30846.1">
    <molecule id="Q5QNW6-1"/>
</dbReference>
<dbReference type="CCDS" id="CCDS53359.1">
    <molecule id="Q5QNW6-2"/>
</dbReference>
<dbReference type="RefSeq" id="NP_001019770.1">
    <molecule id="Q5QNW6-1"/>
    <property type="nucleotide sequence ID" value="NM_001024599.5"/>
</dbReference>
<dbReference type="RefSeq" id="NP_001154806.1">
    <molecule id="Q5QNW6-2"/>
    <property type="nucleotide sequence ID" value="NM_001161334.2"/>
</dbReference>
<dbReference type="PDB" id="6MUO">
    <property type="method" value="EM"/>
    <property type="resolution" value="3.60 A"/>
    <property type="chains" value="D/H=34-125"/>
</dbReference>
<dbReference type="PDB" id="6MUP">
    <property type="method" value="EM"/>
    <property type="resolution" value="3.50 A"/>
    <property type="chains" value="D/H=34-125"/>
</dbReference>
<dbReference type="PDBsum" id="6MUO"/>
<dbReference type="PDBsum" id="6MUP"/>
<dbReference type="EMDB" id="EMD-9250"/>
<dbReference type="EMDB" id="EMD-9251"/>
<dbReference type="SMR" id="Q5QNW6"/>
<dbReference type="BioGRID" id="136811">
    <property type="interactions" value="244"/>
</dbReference>
<dbReference type="CORUM" id="Q5QNW6"/>
<dbReference type="FunCoup" id="Q5QNW6">
    <property type="interactions" value="1792"/>
</dbReference>
<dbReference type="IntAct" id="Q5QNW6">
    <property type="interactions" value="97"/>
</dbReference>
<dbReference type="MINT" id="Q5QNW6"/>
<dbReference type="STRING" id="9606.ENSP00000445831"/>
<dbReference type="ChEMBL" id="CHEMBL4295850"/>
<dbReference type="GlyCosmos" id="Q5QNW6">
    <property type="glycosylation" value="1 site, No reported glycans"/>
</dbReference>
<dbReference type="GlyGen" id="Q5QNW6">
    <property type="glycosylation" value="2 sites, 1 O-linked glycan (1 site)"/>
</dbReference>
<dbReference type="iPTMnet" id="Q5QNW6"/>
<dbReference type="MetOSite" id="Q5QNW6"/>
<dbReference type="PhosphoSitePlus" id="Q5QNW6"/>
<dbReference type="SwissPalm" id="Q5QNW6"/>
<dbReference type="BioMuta" id="HIST2H2BF"/>
<dbReference type="DMDM" id="74743113"/>
<dbReference type="jPOST" id="Q5QNW6"/>
<dbReference type="MassIVE" id="Q5QNW6"/>
<dbReference type="PaxDb" id="9606-ENSP00000445831"/>
<dbReference type="PeptideAtlas" id="Q5QNW6"/>
<dbReference type="PRIDE" id="Q5QNW6"/>
<dbReference type="ProteomicsDB" id="63624">
    <molecule id="Q5QNW6-1"/>
</dbReference>
<dbReference type="ProteomicsDB" id="63625">
    <molecule id="Q5QNW6-2"/>
</dbReference>
<dbReference type="Pumba" id="Q5QNW6"/>
<dbReference type="TopDownProteomics" id="Q5QNW6-1">
    <molecule id="Q5QNW6-1"/>
</dbReference>
<dbReference type="TopDownProteomics" id="Q5QNW6-2">
    <molecule id="Q5QNW6-2"/>
</dbReference>
<dbReference type="Antibodypedia" id="40729">
    <property type="antibodies" value="160 antibodies from 14 providers"/>
</dbReference>
<dbReference type="DNASU" id="440689"/>
<dbReference type="Ensembl" id="ENST00000369167.3">
    <molecule id="Q5QNW6-1"/>
    <property type="protein sequence ID" value="ENSP00000358164.1"/>
    <property type="gene ID" value="ENSG00000203814.7"/>
</dbReference>
<dbReference type="Ensembl" id="ENST00000545683.1">
    <molecule id="Q5QNW6-2"/>
    <property type="protein sequence ID" value="ENSP00000445831.1"/>
    <property type="gene ID" value="ENSG00000203814.7"/>
</dbReference>
<dbReference type="GeneID" id="440689"/>
<dbReference type="KEGG" id="hsa:440689"/>
<dbReference type="MANE-Select" id="ENST00000369167.3">
    <property type="protein sequence ID" value="ENSP00000358164.1"/>
    <property type="RefSeq nucleotide sequence ID" value="NM_001024599.5"/>
    <property type="RefSeq protein sequence ID" value="NP_001019770.1"/>
</dbReference>
<dbReference type="UCSC" id="uc001esr.5">
    <molecule id="Q5QNW6-1"/>
    <property type="organism name" value="human"/>
</dbReference>
<dbReference type="AGR" id="HGNC:24700"/>
<dbReference type="CTD" id="440689"/>
<dbReference type="DisGeNET" id="440689"/>
<dbReference type="GeneCards" id="H2BC18"/>
<dbReference type="HGNC" id="HGNC:24700">
    <property type="gene designation" value="H2BC18"/>
</dbReference>
<dbReference type="HPA" id="ENSG00000203814">
    <property type="expression patterns" value="Low tissue specificity"/>
</dbReference>
<dbReference type="neXtProt" id="NX_Q5QNW6"/>
<dbReference type="OpenTargets" id="ENSG00000203814"/>
<dbReference type="VEuPathDB" id="HostDB:ENSG00000203814"/>
<dbReference type="eggNOG" id="KOG1744">
    <property type="taxonomic scope" value="Eukaryota"/>
</dbReference>
<dbReference type="GeneTree" id="ENSGT01110000267152"/>
<dbReference type="HOGENOM" id="CLU_075666_2_1_1"/>
<dbReference type="InParanoid" id="Q5QNW6"/>
<dbReference type="OMA" id="PLVCHIS"/>
<dbReference type="OrthoDB" id="9618206at2759"/>
<dbReference type="PAN-GO" id="Q5QNW6">
    <property type="GO annotations" value="2 GO annotations based on evolutionary models"/>
</dbReference>
<dbReference type="PhylomeDB" id="Q5QNW6"/>
<dbReference type="TreeFam" id="TF300212"/>
<dbReference type="PathwayCommons" id="Q5QNW6"/>
<dbReference type="Reactome" id="R-HSA-3214815">
    <property type="pathway name" value="HDACs deacetylate histones"/>
</dbReference>
<dbReference type="Reactome" id="R-HSA-3214847">
    <property type="pathway name" value="HATs acetylate histones"/>
</dbReference>
<dbReference type="Reactome" id="R-HSA-5689880">
    <property type="pathway name" value="Ub-specific processing proteases"/>
</dbReference>
<dbReference type="Reactome" id="R-HSA-9609690">
    <property type="pathway name" value="HCMV Early Events"/>
</dbReference>
<dbReference type="Reactome" id="R-HSA-9610379">
    <property type="pathway name" value="HCMV Late Events"/>
</dbReference>
<dbReference type="SignaLink" id="Q5QNW6"/>
<dbReference type="SIGNOR" id="Q5QNW6"/>
<dbReference type="BioGRID-ORCS" id="440689">
    <property type="hits" value="212 hits in 1078 CRISPR screens"/>
</dbReference>
<dbReference type="ChiTaRS" id="HIST2H2BF">
    <property type="organism name" value="human"/>
</dbReference>
<dbReference type="GeneWiki" id="HIST2H2BF"/>
<dbReference type="GenomeRNAi" id="440689"/>
<dbReference type="Pharos" id="Q5QNW6">
    <property type="development level" value="Tdark"/>
</dbReference>
<dbReference type="PRO" id="PR:Q5QNW6"/>
<dbReference type="Proteomes" id="UP000005640">
    <property type="component" value="Chromosome 1"/>
</dbReference>
<dbReference type="RNAct" id="Q5QNW6">
    <property type="molecule type" value="protein"/>
</dbReference>
<dbReference type="Bgee" id="ENSG00000203814">
    <property type="expression patterns" value="Expressed in bone marrow cell and 99 other cell types or tissues"/>
</dbReference>
<dbReference type="GO" id="GO:0005829">
    <property type="term" value="C:cytosol"/>
    <property type="evidence" value="ECO:0000314"/>
    <property type="project" value="HPA"/>
</dbReference>
<dbReference type="GO" id="GO:0070062">
    <property type="term" value="C:extracellular exosome"/>
    <property type="evidence" value="ECO:0007005"/>
    <property type="project" value="UniProtKB"/>
</dbReference>
<dbReference type="GO" id="GO:0005654">
    <property type="term" value="C:nucleoplasm"/>
    <property type="evidence" value="ECO:0000314"/>
    <property type="project" value="HPA"/>
</dbReference>
<dbReference type="GO" id="GO:0000786">
    <property type="term" value="C:nucleosome"/>
    <property type="evidence" value="ECO:0007669"/>
    <property type="project" value="UniProtKB-KW"/>
</dbReference>
<dbReference type="GO" id="GO:0005634">
    <property type="term" value="C:nucleus"/>
    <property type="evidence" value="ECO:0007005"/>
    <property type="project" value="UniProtKB"/>
</dbReference>
<dbReference type="GO" id="GO:0003677">
    <property type="term" value="F:DNA binding"/>
    <property type="evidence" value="ECO:0007669"/>
    <property type="project" value="UniProtKB-KW"/>
</dbReference>
<dbReference type="GO" id="GO:0046982">
    <property type="term" value="F:protein heterodimerization activity"/>
    <property type="evidence" value="ECO:0007669"/>
    <property type="project" value="InterPro"/>
</dbReference>
<dbReference type="GO" id="GO:0030527">
    <property type="term" value="F:structural constituent of chromatin"/>
    <property type="evidence" value="ECO:0007669"/>
    <property type="project" value="InterPro"/>
</dbReference>
<dbReference type="CDD" id="cd22910">
    <property type="entry name" value="HFD_H2B"/>
    <property type="match status" value="1"/>
</dbReference>
<dbReference type="FunFam" id="1.10.20.10:FF:000003">
    <property type="entry name" value="Histone H2B"/>
    <property type="match status" value="1"/>
</dbReference>
<dbReference type="Gene3D" id="1.10.20.10">
    <property type="entry name" value="Histone, subunit A"/>
    <property type="match status" value="1"/>
</dbReference>
<dbReference type="InterPro" id="IPR009072">
    <property type="entry name" value="Histone-fold"/>
</dbReference>
<dbReference type="InterPro" id="IPR007125">
    <property type="entry name" value="Histone_H2A/H2B/H3"/>
</dbReference>
<dbReference type="InterPro" id="IPR000558">
    <property type="entry name" value="Histone_H2B"/>
</dbReference>
<dbReference type="InterPro" id="IPR055333">
    <property type="entry name" value="HISTONE_H2B_site"/>
</dbReference>
<dbReference type="PANTHER" id="PTHR23428">
    <property type="entry name" value="HISTONE H2B"/>
    <property type="match status" value="1"/>
</dbReference>
<dbReference type="Pfam" id="PF00125">
    <property type="entry name" value="Histone"/>
    <property type="match status" value="1"/>
</dbReference>
<dbReference type="PRINTS" id="PR00621">
    <property type="entry name" value="HISTONEH2B"/>
</dbReference>
<dbReference type="SMART" id="SM00427">
    <property type="entry name" value="H2B"/>
    <property type="match status" value="1"/>
</dbReference>
<dbReference type="SUPFAM" id="SSF47113">
    <property type="entry name" value="Histone-fold"/>
    <property type="match status" value="1"/>
</dbReference>
<dbReference type="PROSITE" id="PS00357">
    <property type="entry name" value="HISTONE_H2B"/>
    <property type="match status" value="1"/>
</dbReference>
<keyword id="KW-0002">3D-structure</keyword>
<keyword id="KW-0007">Acetylation</keyword>
<keyword id="KW-0013">ADP-ribosylation</keyword>
<keyword id="KW-0025">Alternative splicing</keyword>
<keyword id="KW-0158">Chromosome</keyword>
<keyword id="KW-0238">DNA-binding</keyword>
<keyword id="KW-0325">Glycoprotein</keyword>
<keyword id="KW-0379">Hydroxylation</keyword>
<keyword id="KW-1017">Isopeptide bond</keyword>
<keyword id="KW-0488">Methylation</keyword>
<keyword id="KW-0544">Nucleosome core</keyword>
<keyword id="KW-0539">Nucleus</keyword>
<keyword id="KW-0597">Phosphoprotein</keyword>
<keyword id="KW-1267">Proteomics identification</keyword>
<keyword id="KW-1185">Reference proteome</keyword>
<keyword id="KW-0832">Ubl conjugation</keyword>